<feature type="chain" id="PRO_1000055292" description="Large ribosomal subunit protein uL6">
    <location>
        <begin position="1"/>
        <end position="177"/>
    </location>
</feature>
<name>RL6_CUPNH</name>
<sequence>MSRVGKAPIALPKGAEVNVAAGVLSVKGPLGTLSQPIHSLVKVNVENDTLTFSPADESREANALQGTMRALVANMVKGVTTGFERKLNLVGVGYRAQLQGAALKLQLGFSHDVIHEMPEGVKAETPTQTEIIIKGADKQKVGQVAAEVRAYRPPEPYKGKGVRYSDERVILKETKKK</sequence>
<evidence type="ECO:0000255" key="1">
    <source>
        <dbReference type="HAMAP-Rule" id="MF_01365"/>
    </source>
</evidence>
<evidence type="ECO:0000305" key="2"/>
<gene>
    <name evidence="1" type="primary">rplF</name>
    <name type="ordered locus">H16_A3469</name>
</gene>
<dbReference type="EMBL" id="AM260479">
    <property type="protein sequence ID" value="CAJ94537.1"/>
    <property type="molecule type" value="Genomic_DNA"/>
</dbReference>
<dbReference type="RefSeq" id="WP_010812383.1">
    <property type="nucleotide sequence ID" value="NZ_CP039287.1"/>
</dbReference>
<dbReference type="SMR" id="Q0K634"/>
<dbReference type="STRING" id="381666.H16_A3469"/>
<dbReference type="GeneID" id="34308416"/>
<dbReference type="KEGG" id="reh:H16_A3469"/>
<dbReference type="eggNOG" id="COG0097">
    <property type="taxonomic scope" value="Bacteria"/>
</dbReference>
<dbReference type="HOGENOM" id="CLU_065464_1_2_4"/>
<dbReference type="OrthoDB" id="9805007at2"/>
<dbReference type="Proteomes" id="UP000008210">
    <property type="component" value="Chromosome 1"/>
</dbReference>
<dbReference type="GO" id="GO:0022625">
    <property type="term" value="C:cytosolic large ribosomal subunit"/>
    <property type="evidence" value="ECO:0007669"/>
    <property type="project" value="TreeGrafter"/>
</dbReference>
<dbReference type="GO" id="GO:0019843">
    <property type="term" value="F:rRNA binding"/>
    <property type="evidence" value="ECO:0007669"/>
    <property type="project" value="UniProtKB-UniRule"/>
</dbReference>
<dbReference type="GO" id="GO:0003735">
    <property type="term" value="F:structural constituent of ribosome"/>
    <property type="evidence" value="ECO:0007669"/>
    <property type="project" value="InterPro"/>
</dbReference>
<dbReference type="GO" id="GO:0002181">
    <property type="term" value="P:cytoplasmic translation"/>
    <property type="evidence" value="ECO:0007669"/>
    <property type="project" value="TreeGrafter"/>
</dbReference>
<dbReference type="FunFam" id="3.90.930.12:FF:000001">
    <property type="entry name" value="50S ribosomal protein L6"/>
    <property type="match status" value="1"/>
</dbReference>
<dbReference type="FunFam" id="3.90.930.12:FF:000002">
    <property type="entry name" value="50S ribosomal protein L6"/>
    <property type="match status" value="1"/>
</dbReference>
<dbReference type="Gene3D" id="3.90.930.12">
    <property type="entry name" value="Ribosomal protein L6, alpha-beta domain"/>
    <property type="match status" value="2"/>
</dbReference>
<dbReference type="HAMAP" id="MF_01365_B">
    <property type="entry name" value="Ribosomal_uL6_B"/>
    <property type="match status" value="1"/>
</dbReference>
<dbReference type="InterPro" id="IPR000702">
    <property type="entry name" value="Ribosomal_uL6-like"/>
</dbReference>
<dbReference type="InterPro" id="IPR036789">
    <property type="entry name" value="Ribosomal_uL6-like_a/b-dom_sf"/>
</dbReference>
<dbReference type="InterPro" id="IPR020040">
    <property type="entry name" value="Ribosomal_uL6_a/b-dom"/>
</dbReference>
<dbReference type="InterPro" id="IPR019906">
    <property type="entry name" value="Ribosomal_uL6_bac-type"/>
</dbReference>
<dbReference type="InterPro" id="IPR002358">
    <property type="entry name" value="Ribosomal_uL6_CS"/>
</dbReference>
<dbReference type="NCBIfam" id="TIGR03654">
    <property type="entry name" value="L6_bact"/>
    <property type="match status" value="1"/>
</dbReference>
<dbReference type="PANTHER" id="PTHR11655">
    <property type="entry name" value="60S/50S RIBOSOMAL PROTEIN L6/L9"/>
    <property type="match status" value="1"/>
</dbReference>
<dbReference type="PANTHER" id="PTHR11655:SF14">
    <property type="entry name" value="LARGE RIBOSOMAL SUBUNIT PROTEIN UL6M"/>
    <property type="match status" value="1"/>
</dbReference>
<dbReference type="Pfam" id="PF00347">
    <property type="entry name" value="Ribosomal_L6"/>
    <property type="match status" value="2"/>
</dbReference>
<dbReference type="PIRSF" id="PIRSF002162">
    <property type="entry name" value="Ribosomal_L6"/>
    <property type="match status" value="1"/>
</dbReference>
<dbReference type="PRINTS" id="PR00059">
    <property type="entry name" value="RIBOSOMALL6"/>
</dbReference>
<dbReference type="SUPFAM" id="SSF56053">
    <property type="entry name" value="Ribosomal protein L6"/>
    <property type="match status" value="2"/>
</dbReference>
<dbReference type="PROSITE" id="PS00525">
    <property type="entry name" value="RIBOSOMAL_L6_1"/>
    <property type="match status" value="1"/>
</dbReference>
<proteinExistence type="inferred from homology"/>
<protein>
    <recommendedName>
        <fullName evidence="1">Large ribosomal subunit protein uL6</fullName>
    </recommendedName>
    <alternativeName>
        <fullName evidence="2">50S ribosomal protein L6</fullName>
    </alternativeName>
</protein>
<comment type="function">
    <text evidence="1">This protein binds to the 23S rRNA, and is important in its secondary structure. It is located near the subunit interface in the base of the L7/L12 stalk, and near the tRNA binding site of the peptidyltransferase center.</text>
</comment>
<comment type="subunit">
    <text evidence="1">Part of the 50S ribosomal subunit.</text>
</comment>
<comment type="similarity">
    <text evidence="1">Belongs to the universal ribosomal protein uL6 family.</text>
</comment>
<reference key="1">
    <citation type="journal article" date="2006" name="Nat. Biotechnol.">
        <title>Genome sequence of the bioplastic-producing 'Knallgas' bacterium Ralstonia eutropha H16.</title>
        <authorList>
            <person name="Pohlmann A."/>
            <person name="Fricke W.F."/>
            <person name="Reinecke F."/>
            <person name="Kusian B."/>
            <person name="Liesegang H."/>
            <person name="Cramm R."/>
            <person name="Eitinger T."/>
            <person name="Ewering C."/>
            <person name="Poetter M."/>
            <person name="Schwartz E."/>
            <person name="Strittmatter A."/>
            <person name="Voss I."/>
            <person name="Gottschalk G."/>
            <person name="Steinbuechel A."/>
            <person name="Friedrich B."/>
            <person name="Bowien B."/>
        </authorList>
    </citation>
    <scope>NUCLEOTIDE SEQUENCE [LARGE SCALE GENOMIC DNA]</scope>
    <source>
        <strain>ATCC 17699 / DSM 428 / KCTC 22496 / NCIMB 10442 / H16 / Stanier 337</strain>
    </source>
</reference>
<accession>Q0K634</accession>
<keyword id="KW-1185">Reference proteome</keyword>
<keyword id="KW-0687">Ribonucleoprotein</keyword>
<keyword id="KW-0689">Ribosomal protein</keyword>
<keyword id="KW-0694">RNA-binding</keyword>
<keyword id="KW-0699">rRNA-binding</keyword>
<organism>
    <name type="scientific">Cupriavidus necator (strain ATCC 17699 / DSM 428 / KCTC 22496 / NCIMB 10442 / H16 / Stanier 337)</name>
    <name type="common">Ralstonia eutropha</name>
    <dbReference type="NCBI Taxonomy" id="381666"/>
    <lineage>
        <taxon>Bacteria</taxon>
        <taxon>Pseudomonadati</taxon>
        <taxon>Pseudomonadota</taxon>
        <taxon>Betaproteobacteria</taxon>
        <taxon>Burkholderiales</taxon>
        <taxon>Burkholderiaceae</taxon>
        <taxon>Cupriavidus</taxon>
    </lineage>
</organism>